<gene>
    <name evidence="2" type="primary">mutM</name>
    <name evidence="2" type="synonym">fpg</name>
    <name type="ordered locus">SeAg_B3943</name>
</gene>
<evidence type="ECO:0000250" key="1"/>
<evidence type="ECO:0000255" key="2">
    <source>
        <dbReference type="HAMAP-Rule" id="MF_00103"/>
    </source>
</evidence>
<sequence length="269" mass="30251">MPELPEVETSRRGIEPHLVGATILHAHIRNGRLRWPVSDEIYRLSDTPVLSVQRRAKYLLLELPDGWIIIHLGMSGSLRILSEALPAEKHDHVDLVMSNGKILRYTDPRRFGAWLWTKELEGHNVLAHLGPEPLSDEFNGEYLRQKCAKKKTAIKPWLMDNKLVVGVGNIYASESLFAAGIHPDRLASSLSTEECDLLARVIKAVLLRSIEQGGTTLKDFLQSDGKPGYFAQELQVYGRKGEPCRVCGTPIVATKHAQRATFYCRHCQK</sequence>
<proteinExistence type="inferred from homology"/>
<reference key="1">
    <citation type="journal article" date="2011" name="J. Bacteriol.">
        <title>Comparative genomics of 28 Salmonella enterica isolates: evidence for CRISPR-mediated adaptive sublineage evolution.</title>
        <authorList>
            <person name="Fricke W.F."/>
            <person name="Mammel M.K."/>
            <person name="McDermott P.F."/>
            <person name="Tartera C."/>
            <person name="White D.G."/>
            <person name="Leclerc J.E."/>
            <person name="Ravel J."/>
            <person name="Cebula T.A."/>
        </authorList>
    </citation>
    <scope>NUCLEOTIDE SEQUENCE [LARGE SCALE GENOMIC DNA]</scope>
    <source>
        <strain>SL483</strain>
    </source>
</reference>
<comment type="function">
    <text evidence="2">Involved in base excision repair of DNA damaged by oxidation or by mutagenic agents. Acts as a DNA glycosylase that recognizes and removes damaged bases. Has a preference for oxidized purines, such as 7,8-dihydro-8-oxoguanine (8-oxoG). Has AP (apurinic/apyrimidinic) lyase activity and introduces nicks in the DNA strand. Cleaves the DNA backbone by beta-delta elimination to generate a single-strand break at the site of the removed base with both 3'- and 5'-phosphates.</text>
</comment>
<comment type="catalytic activity">
    <reaction evidence="2">
        <text>Hydrolysis of DNA containing ring-opened 7-methylguanine residues, releasing 2,6-diamino-4-hydroxy-5-(N-methyl)formamidopyrimidine.</text>
        <dbReference type="EC" id="3.2.2.23"/>
    </reaction>
</comment>
<comment type="catalytic activity">
    <reaction evidence="2">
        <text>2'-deoxyribonucleotide-(2'-deoxyribose 5'-phosphate)-2'-deoxyribonucleotide-DNA = a 3'-end 2'-deoxyribonucleotide-(2,3-dehydro-2,3-deoxyribose 5'-phosphate)-DNA + a 5'-end 5'-phospho-2'-deoxyribonucleoside-DNA + H(+)</text>
        <dbReference type="Rhea" id="RHEA:66592"/>
        <dbReference type="Rhea" id="RHEA-COMP:13180"/>
        <dbReference type="Rhea" id="RHEA-COMP:16897"/>
        <dbReference type="Rhea" id="RHEA-COMP:17067"/>
        <dbReference type="ChEBI" id="CHEBI:15378"/>
        <dbReference type="ChEBI" id="CHEBI:136412"/>
        <dbReference type="ChEBI" id="CHEBI:157695"/>
        <dbReference type="ChEBI" id="CHEBI:167181"/>
        <dbReference type="EC" id="4.2.99.18"/>
    </reaction>
</comment>
<comment type="cofactor">
    <cofactor evidence="2">
        <name>Zn(2+)</name>
        <dbReference type="ChEBI" id="CHEBI:29105"/>
    </cofactor>
    <text evidence="2">Binds 1 zinc ion per subunit.</text>
</comment>
<comment type="subunit">
    <text evidence="2">Monomer.</text>
</comment>
<comment type="similarity">
    <text evidence="2">Belongs to the FPG family.</text>
</comment>
<feature type="initiator methionine" description="Removed" evidence="1">
    <location>
        <position position="1"/>
    </location>
</feature>
<feature type="chain" id="PRO_1000094070" description="Formamidopyrimidine-DNA glycosylase">
    <location>
        <begin position="2"/>
        <end position="269"/>
    </location>
</feature>
<feature type="zinc finger region" description="FPG-type" evidence="2">
    <location>
        <begin position="235"/>
        <end position="269"/>
    </location>
</feature>
<feature type="active site" description="Schiff-base intermediate with DNA" evidence="2">
    <location>
        <position position="2"/>
    </location>
</feature>
<feature type="active site" description="Proton donor" evidence="2">
    <location>
        <position position="3"/>
    </location>
</feature>
<feature type="active site" description="Proton donor; for beta-elimination activity" evidence="2">
    <location>
        <position position="57"/>
    </location>
</feature>
<feature type="active site" description="Proton donor; for delta-elimination activity" evidence="2">
    <location>
        <position position="259"/>
    </location>
</feature>
<feature type="binding site" evidence="2">
    <location>
        <position position="90"/>
    </location>
    <ligand>
        <name>DNA</name>
        <dbReference type="ChEBI" id="CHEBI:16991"/>
    </ligand>
</feature>
<feature type="binding site" evidence="2">
    <location>
        <position position="109"/>
    </location>
    <ligand>
        <name>DNA</name>
        <dbReference type="ChEBI" id="CHEBI:16991"/>
    </ligand>
</feature>
<feature type="binding site" evidence="2">
    <location>
        <position position="150"/>
    </location>
    <ligand>
        <name>DNA</name>
        <dbReference type="ChEBI" id="CHEBI:16991"/>
    </ligand>
</feature>
<dbReference type="EC" id="3.2.2.23" evidence="2"/>
<dbReference type="EC" id="4.2.99.18" evidence="2"/>
<dbReference type="EMBL" id="CP001138">
    <property type="protein sequence ID" value="ACH50699.1"/>
    <property type="molecule type" value="Genomic_DNA"/>
</dbReference>
<dbReference type="RefSeq" id="WP_001114516.1">
    <property type="nucleotide sequence ID" value="NC_011149.1"/>
</dbReference>
<dbReference type="SMR" id="B5EXE0"/>
<dbReference type="KEGG" id="sea:SeAg_B3943"/>
<dbReference type="HOGENOM" id="CLU_038423_1_1_6"/>
<dbReference type="Proteomes" id="UP000008819">
    <property type="component" value="Chromosome"/>
</dbReference>
<dbReference type="GO" id="GO:0034039">
    <property type="term" value="F:8-oxo-7,8-dihydroguanine DNA N-glycosylase activity"/>
    <property type="evidence" value="ECO:0007669"/>
    <property type="project" value="TreeGrafter"/>
</dbReference>
<dbReference type="GO" id="GO:0140078">
    <property type="term" value="F:class I DNA-(apurinic or apyrimidinic site) endonuclease activity"/>
    <property type="evidence" value="ECO:0007669"/>
    <property type="project" value="UniProtKB-EC"/>
</dbReference>
<dbReference type="GO" id="GO:0003684">
    <property type="term" value="F:damaged DNA binding"/>
    <property type="evidence" value="ECO:0007669"/>
    <property type="project" value="InterPro"/>
</dbReference>
<dbReference type="GO" id="GO:0008270">
    <property type="term" value="F:zinc ion binding"/>
    <property type="evidence" value="ECO:0007669"/>
    <property type="project" value="UniProtKB-UniRule"/>
</dbReference>
<dbReference type="GO" id="GO:0006284">
    <property type="term" value="P:base-excision repair"/>
    <property type="evidence" value="ECO:0007669"/>
    <property type="project" value="InterPro"/>
</dbReference>
<dbReference type="CDD" id="cd08966">
    <property type="entry name" value="EcFpg-like_N"/>
    <property type="match status" value="1"/>
</dbReference>
<dbReference type="FunFam" id="1.10.8.50:FF:000003">
    <property type="entry name" value="Formamidopyrimidine-DNA glycosylase"/>
    <property type="match status" value="1"/>
</dbReference>
<dbReference type="FunFam" id="3.20.190.10:FF:000001">
    <property type="entry name" value="Formamidopyrimidine-DNA glycosylase"/>
    <property type="match status" value="1"/>
</dbReference>
<dbReference type="Gene3D" id="1.10.8.50">
    <property type="match status" value="1"/>
</dbReference>
<dbReference type="Gene3D" id="3.20.190.10">
    <property type="entry name" value="MutM-like, N-terminal"/>
    <property type="match status" value="1"/>
</dbReference>
<dbReference type="HAMAP" id="MF_00103">
    <property type="entry name" value="Fapy_DNA_glycosyl"/>
    <property type="match status" value="1"/>
</dbReference>
<dbReference type="InterPro" id="IPR015886">
    <property type="entry name" value="DNA_glyclase/AP_lyase_DNA-bd"/>
</dbReference>
<dbReference type="InterPro" id="IPR015887">
    <property type="entry name" value="DNA_glyclase_Znf_dom_DNA_BS"/>
</dbReference>
<dbReference type="InterPro" id="IPR020629">
    <property type="entry name" value="Formamido-pyr_DNA_Glyclase"/>
</dbReference>
<dbReference type="InterPro" id="IPR012319">
    <property type="entry name" value="FPG_cat"/>
</dbReference>
<dbReference type="InterPro" id="IPR035937">
    <property type="entry name" value="MutM-like_N-ter"/>
</dbReference>
<dbReference type="InterPro" id="IPR010979">
    <property type="entry name" value="Ribosomal_uS13-like_H2TH"/>
</dbReference>
<dbReference type="InterPro" id="IPR000214">
    <property type="entry name" value="Znf_DNA_glyclase/AP_lyase"/>
</dbReference>
<dbReference type="InterPro" id="IPR010663">
    <property type="entry name" value="Znf_FPG/IleRS"/>
</dbReference>
<dbReference type="NCBIfam" id="TIGR00577">
    <property type="entry name" value="fpg"/>
    <property type="match status" value="1"/>
</dbReference>
<dbReference type="NCBIfam" id="NF002211">
    <property type="entry name" value="PRK01103.1"/>
    <property type="match status" value="1"/>
</dbReference>
<dbReference type="PANTHER" id="PTHR22993">
    <property type="entry name" value="FORMAMIDOPYRIMIDINE-DNA GLYCOSYLASE"/>
    <property type="match status" value="1"/>
</dbReference>
<dbReference type="PANTHER" id="PTHR22993:SF9">
    <property type="entry name" value="FORMAMIDOPYRIMIDINE-DNA GLYCOSYLASE"/>
    <property type="match status" value="1"/>
</dbReference>
<dbReference type="Pfam" id="PF01149">
    <property type="entry name" value="Fapy_DNA_glyco"/>
    <property type="match status" value="1"/>
</dbReference>
<dbReference type="Pfam" id="PF06831">
    <property type="entry name" value="H2TH"/>
    <property type="match status" value="1"/>
</dbReference>
<dbReference type="Pfam" id="PF06827">
    <property type="entry name" value="zf-FPG_IleRS"/>
    <property type="match status" value="1"/>
</dbReference>
<dbReference type="SMART" id="SM00898">
    <property type="entry name" value="Fapy_DNA_glyco"/>
    <property type="match status" value="1"/>
</dbReference>
<dbReference type="SMART" id="SM01232">
    <property type="entry name" value="H2TH"/>
    <property type="match status" value="1"/>
</dbReference>
<dbReference type="SUPFAM" id="SSF57716">
    <property type="entry name" value="Glucocorticoid receptor-like (DNA-binding domain)"/>
    <property type="match status" value="1"/>
</dbReference>
<dbReference type="SUPFAM" id="SSF81624">
    <property type="entry name" value="N-terminal domain of MutM-like DNA repair proteins"/>
    <property type="match status" value="1"/>
</dbReference>
<dbReference type="SUPFAM" id="SSF46946">
    <property type="entry name" value="S13-like H2TH domain"/>
    <property type="match status" value="1"/>
</dbReference>
<dbReference type="PROSITE" id="PS51068">
    <property type="entry name" value="FPG_CAT"/>
    <property type="match status" value="1"/>
</dbReference>
<dbReference type="PROSITE" id="PS01242">
    <property type="entry name" value="ZF_FPG_1"/>
    <property type="match status" value="1"/>
</dbReference>
<dbReference type="PROSITE" id="PS51066">
    <property type="entry name" value="ZF_FPG_2"/>
    <property type="match status" value="1"/>
</dbReference>
<keyword id="KW-0227">DNA damage</keyword>
<keyword id="KW-0234">DNA repair</keyword>
<keyword id="KW-0238">DNA-binding</keyword>
<keyword id="KW-0326">Glycosidase</keyword>
<keyword id="KW-0378">Hydrolase</keyword>
<keyword id="KW-0456">Lyase</keyword>
<keyword id="KW-0479">Metal-binding</keyword>
<keyword id="KW-0511">Multifunctional enzyme</keyword>
<keyword id="KW-0862">Zinc</keyword>
<keyword id="KW-0863">Zinc-finger</keyword>
<protein>
    <recommendedName>
        <fullName evidence="2">Formamidopyrimidine-DNA glycosylase</fullName>
        <shortName evidence="2">Fapy-DNA glycosylase</shortName>
        <ecNumber evidence="2">3.2.2.23</ecNumber>
    </recommendedName>
    <alternativeName>
        <fullName evidence="2">DNA-(apurinic or apyrimidinic site) lyase MutM</fullName>
        <shortName evidence="2">AP lyase MutM</shortName>
        <ecNumber evidence="2">4.2.99.18</ecNumber>
    </alternativeName>
</protein>
<accession>B5EXE0</accession>
<name>FPG_SALA4</name>
<organism>
    <name type="scientific">Salmonella agona (strain SL483)</name>
    <dbReference type="NCBI Taxonomy" id="454166"/>
    <lineage>
        <taxon>Bacteria</taxon>
        <taxon>Pseudomonadati</taxon>
        <taxon>Pseudomonadota</taxon>
        <taxon>Gammaproteobacteria</taxon>
        <taxon>Enterobacterales</taxon>
        <taxon>Enterobacteriaceae</taxon>
        <taxon>Salmonella</taxon>
    </lineage>
</organism>